<evidence type="ECO:0000255" key="1"/>
<evidence type="ECO:0000255" key="2">
    <source>
        <dbReference type="PROSITE-ProRule" id="PRU00674"/>
    </source>
</evidence>
<evidence type="ECO:0000269" key="3">
    <source>
    </source>
</evidence>
<evidence type="ECO:0000269" key="4">
    <source>
    </source>
</evidence>
<evidence type="ECO:0000269" key="5">
    <source>
    </source>
</evidence>
<evidence type="ECO:0000269" key="6">
    <source>
    </source>
</evidence>
<evidence type="ECO:0000305" key="7"/>
<evidence type="ECO:0000312" key="8">
    <source>
        <dbReference type="HGNC" id="HGNC:2085"/>
    </source>
</evidence>
<name>COL_HUMAN</name>
<accession>P04118</accession>
<accession>Q5T9G7</accession>
<accession>Q5U809</accession>
<reference key="1">
    <citation type="journal article" date="1990" name="Biochemistry">
        <title>Cloning and characterization of the human colipase cDNA.</title>
        <authorList>
            <person name="Lowe M.E."/>
            <person name="Rosenblum J.L."/>
            <person name="McEwen P."/>
            <person name="Strauss A.W."/>
        </authorList>
    </citation>
    <scope>NUCLEOTIDE SEQUENCE [MRNA]</scope>
    <scope>TISSUE SPECIFICITY</scope>
</reference>
<reference key="2">
    <citation type="journal article" date="1992" name="Biochemistry">
        <title>The human colipase gene: isolation, chromosomal location, and tissue-specific expression.</title>
        <authorList>
            <person name="Sims H.F."/>
            <person name="Lowe M.E."/>
        </authorList>
    </citation>
    <scope>NUCLEOTIDE SEQUENCE [GENOMIC DNA]</scope>
</reference>
<reference key="3">
    <citation type="submission" date="2003-05" db="EMBL/GenBank/DDBJ databases">
        <title>Cloning of human full-length CDSs in BD Creator(TM) system donor vector.</title>
        <authorList>
            <person name="Kalnine N."/>
            <person name="Chen X."/>
            <person name="Rolfs A."/>
            <person name="Halleck A."/>
            <person name="Hines L."/>
            <person name="Eisenstein S."/>
            <person name="Koundinya M."/>
            <person name="Raphael J."/>
            <person name="Moreira D."/>
            <person name="Kelley T."/>
            <person name="LaBaer J."/>
            <person name="Lin Y."/>
            <person name="Phelan M."/>
            <person name="Farmer A."/>
        </authorList>
    </citation>
    <scope>NUCLEOTIDE SEQUENCE [LARGE SCALE MRNA]</scope>
</reference>
<reference key="4">
    <citation type="journal article" date="2003" name="Nature">
        <title>The DNA sequence and analysis of human chromosome 6.</title>
        <authorList>
            <person name="Mungall A.J."/>
            <person name="Palmer S.A."/>
            <person name="Sims S.K."/>
            <person name="Edwards C.A."/>
            <person name="Ashurst J.L."/>
            <person name="Wilming L."/>
            <person name="Jones M.C."/>
            <person name="Horton R."/>
            <person name="Hunt S.E."/>
            <person name="Scott C.E."/>
            <person name="Gilbert J.G.R."/>
            <person name="Clamp M.E."/>
            <person name="Bethel G."/>
            <person name="Milne S."/>
            <person name="Ainscough R."/>
            <person name="Almeida J.P."/>
            <person name="Ambrose K.D."/>
            <person name="Andrews T.D."/>
            <person name="Ashwell R.I.S."/>
            <person name="Babbage A.K."/>
            <person name="Bagguley C.L."/>
            <person name="Bailey J."/>
            <person name="Banerjee R."/>
            <person name="Barker D.J."/>
            <person name="Barlow K.F."/>
            <person name="Bates K."/>
            <person name="Beare D.M."/>
            <person name="Beasley H."/>
            <person name="Beasley O."/>
            <person name="Bird C.P."/>
            <person name="Blakey S.E."/>
            <person name="Bray-Allen S."/>
            <person name="Brook J."/>
            <person name="Brown A.J."/>
            <person name="Brown J.Y."/>
            <person name="Burford D.C."/>
            <person name="Burrill W."/>
            <person name="Burton J."/>
            <person name="Carder C."/>
            <person name="Carter N.P."/>
            <person name="Chapman J.C."/>
            <person name="Clark S.Y."/>
            <person name="Clark G."/>
            <person name="Clee C.M."/>
            <person name="Clegg S."/>
            <person name="Cobley V."/>
            <person name="Collier R.E."/>
            <person name="Collins J.E."/>
            <person name="Colman L.K."/>
            <person name="Corby N.R."/>
            <person name="Coville G.J."/>
            <person name="Culley K.M."/>
            <person name="Dhami P."/>
            <person name="Davies J."/>
            <person name="Dunn M."/>
            <person name="Earthrowl M.E."/>
            <person name="Ellington A.E."/>
            <person name="Evans K.A."/>
            <person name="Faulkner L."/>
            <person name="Francis M.D."/>
            <person name="Frankish A."/>
            <person name="Frankland J."/>
            <person name="French L."/>
            <person name="Garner P."/>
            <person name="Garnett J."/>
            <person name="Ghori M.J."/>
            <person name="Gilby L.M."/>
            <person name="Gillson C.J."/>
            <person name="Glithero R.J."/>
            <person name="Grafham D.V."/>
            <person name="Grant M."/>
            <person name="Gribble S."/>
            <person name="Griffiths C."/>
            <person name="Griffiths M.N.D."/>
            <person name="Hall R."/>
            <person name="Halls K.S."/>
            <person name="Hammond S."/>
            <person name="Harley J.L."/>
            <person name="Hart E.A."/>
            <person name="Heath P.D."/>
            <person name="Heathcott R."/>
            <person name="Holmes S.J."/>
            <person name="Howden P.J."/>
            <person name="Howe K.L."/>
            <person name="Howell G.R."/>
            <person name="Huckle E."/>
            <person name="Humphray S.J."/>
            <person name="Humphries M.D."/>
            <person name="Hunt A.R."/>
            <person name="Johnson C.M."/>
            <person name="Joy A.A."/>
            <person name="Kay M."/>
            <person name="Keenan S.J."/>
            <person name="Kimberley A.M."/>
            <person name="King A."/>
            <person name="Laird G.K."/>
            <person name="Langford C."/>
            <person name="Lawlor S."/>
            <person name="Leongamornlert D.A."/>
            <person name="Leversha M."/>
            <person name="Lloyd C.R."/>
            <person name="Lloyd D.M."/>
            <person name="Loveland J.E."/>
            <person name="Lovell J."/>
            <person name="Martin S."/>
            <person name="Mashreghi-Mohammadi M."/>
            <person name="Maslen G.L."/>
            <person name="Matthews L."/>
            <person name="McCann O.T."/>
            <person name="McLaren S.J."/>
            <person name="McLay K."/>
            <person name="McMurray A."/>
            <person name="Moore M.J.F."/>
            <person name="Mullikin J.C."/>
            <person name="Niblett D."/>
            <person name="Nickerson T."/>
            <person name="Novik K.L."/>
            <person name="Oliver K."/>
            <person name="Overton-Larty E.K."/>
            <person name="Parker A."/>
            <person name="Patel R."/>
            <person name="Pearce A.V."/>
            <person name="Peck A.I."/>
            <person name="Phillimore B.J.C.T."/>
            <person name="Phillips S."/>
            <person name="Plumb R.W."/>
            <person name="Porter K.M."/>
            <person name="Ramsey Y."/>
            <person name="Ranby S.A."/>
            <person name="Rice C.M."/>
            <person name="Ross M.T."/>
            <person name="Searle S.M."/>
            <person name="Sehra H.K."/>
            <person name="Sheridan E."/>
            <person name="Skuce C.D."/>
            <person name="Smith S."/>
            <person name="Smith M."/>
            <person name="Spraggon L."/>
            <person name="Squares S.L."/>
            <person name="Steward C.A."/>
            <person name="Sycamore N."/>
            <person name="Tamlyn-Hall G."/>
            <person name="Tester J."/>
            <person name="Theaker A.J."/>
            <person name="Thomas D.W."/>
            <person name="Thorpe A."/>
            <person name="Tracey A."/>
            <person name="Tromans A."/>
            <person name="Tubby B."/>
            <person name="Wall M."/>
            <person name="Wallis J.M."/>
            <person name="West A.P."/>
            <person name="White S.S."/>
            <person name="Whitehead S.L."/>
            <person name="Whittaker H."/>
            <person name="Wild A."/>
            <person name="Willey D.J."/>
            <person name="Wilmer T.E."/>
            <person name="Wood J.M."/>
            <person name="Wray P.W."/>
            <person name="Wyatt J.C."/>
            <person name="Young L."/>
            <person name="Younger R.M."/>
            <person name="Bentley D.R."/>
            <person name="Coulson A."/>
            <person name="Durbin R.M."/>
            <person name="Hubbard T."/>
            <person name="Sulston J.E."/>
            <person name="Dunham I."/>
            <person name="Rogers J."/>
            <person name="Beck S."/>
        </authorList>
    </citation>
    <scope>NUCLEOTIDE SEQUENCE [LARGE SCALE GENOMIC DNA]</scope>
</reference>
<reference key="5">
    <citation type="submission" date="2005-07" db="EMBL/GenBank/DDBJ databases">
        <authorList>
            <person name="Mural R.J."/>
            <person name="Istrail S."/>
            <person name="Sutton G.G."/>
            <person name="Florea L."/>
            <person name="Halpern A.L."/>
            <person name="Mobarry C.M."/>
            <person name="Lippert R."/>
            <person name="Walenz B."/>
            <person name="Shatkay H."/>
            <person name="Dew I."/>
            <person name="Miller J.R."/>
            <person name="Flanigan M.J."/>
            <person name="Edwards N.J."/>
            <person name="Bolanos R."/>
            <person name="Fasulo D."/>
            <person name="Halldorsson B.V."/>
            <person name="Hannenhalli S."/>
            <person name="Turner R."/>
            <person name="Yooseph S."/>
            <person name="Lu F."/>
            <person name="Nusskern D.R."/>
            <person name="Shue B.C."/>
            <person name="Zheng X.H."/>
            <person name="Zhong F."/>
            <person name="Delcher A.L."/>
            <person name="Huson D.H."/>
            <person name="Kravitz S.A."/>
            <person name="Mouchard L."/>
            <person name="Reinert K."/>
            <person name="Remington K.A."/>
            <person name="Clark A.G."/>
            <person name="Waterman M.S."/>
            <person name="Eichler E.E."/>
            <person name="Adams M.D."/>
            <person name="Hunkapiller M.W."/>
            <person name="Myers E.W."/>
            <person name="Venter J.C."/>
        </authorList>
    </citation>
    <scope>NUCLEOTIDE SEQUENCE [LARGE SCALE GENOMIC DNA]</scope>
</reference>
<reference key="6">
    <citation type="journal article" date="2004" name="Genome Res.">
        <title>The status, quality, and expansion of the NIH full-length cDNA project: the Mammalian Gene Collection (MGC).</title>
        <authorList>
            <consortium name="The MGC Project Team"/>
        </authorList>
    </citation>
    <scope>NUCLEOTIDE SEQUENCE [LARGE SCALE MRNA]</scope>
    <source>
        <tissue>Pancreas</tissue>
    </source>
</reference>
<reference key="7">
    <citation type="submission" date="2004-10" db="EMBL/GenBank/DDBJ databases">
        <title>Structure of human pancreatic colipase gene (CLPS).</title>
        <authorList>
            <person name="Reichwald K."/>
            <person name="Petz U."/>
            <person name="Platzer M."/>
        </authorList>
    </citation>
    <scope>NUCLEOTIDE SEQUENCE [GENOMIC DNA] OF 4-112</scope>
    <source>
        <tissue>Pancreas</tissue>
    </source>
</reference>
<reference key="8">
    <citation type="journal article" date="1984" name="Biochim. Biophys. Acta">
        <title>The primary sequence of human pancreatic colipase.</title>
        <authorList>
            <person name="Sternby B."/>
            <person name="Engstroem A."/>
            <person name="Hellman U."/>
            <person name="Vihert A.M."/>
            <person name="Sternby N.-H."/>
            <person name="Borgstroem B."/>
        </authorList>
    </citation>
    <scope>PROTEIN SEQUENCE OF 23-108</scope>
    <source>
        <tissue>Pancreas</tissue>
    </source>
</reference>
<reference key="9">
    <citation type="journal article" date="2007" name="J. Lipid Res.">
        <title>Further biochemical characterization of human pancreatic lipase-related protein 2 expressed in yeast cells.</title>
        <authorList>
            <person name="Eydoux C."/>
            <person name="De Caro J."/>
            <person name="Ferrato F."/>
            <person name="Boullanger P."/>
            <person name="Lafont D."/>
            <person name="Laugier R."/>
            <person name="Carriere F."/>
            <person name="De Caro A."/>
        </authorList>
    </citation>
    <scope>FUNCTION</scope>
</reference>
<reference key="10">
    <citation type="journal article" date="2015" name="J. Biol. Chem.">
        <title>The beta5-Loop and Lid Domain Contribute to the Substrate Specificity of Pancreatic Lipase-related Protein 2 (PNLIPRP2).</title>
        <authorList>
            <person name="Xiao X."/>
            <person name="Lowe M.E."/>
        </authorList>
    </citation>
    <scope>FUNCTION</scope>
</reference>
<reference key="11">
    <citation type="journal article" date="1993" name="Nature">
        <title>Interfacial activation of the lipase-procolipase complex by mixed micelles revealed by X-ray crystallography.</title>
        <authorList>
            <person name="van Tilbeurgh H."/>
            <person name="Egloff M.-P."/>
            <person name="Martinez C."/>
            <person name="Rugani N."/>
            <person name="Verger R."/>
            <person name="Cambillau C."/>
        </authorList>
    </citation>
    <scope>X-RAY CRYSTALLOGRAPHY (3.0 ANGSTROMS) IN COMPLEX WITH PNLIP</scope>
    <scope>INTERACTION WITH PNLIP</scope>
</reference>
<reference key="12">
    <citation type="journal article" date="2005" name="Mol. Nutr. Food Res.">
        <title>Putative association between a new polymorphism in exon 3 (Arg109Cys) of the pancreatic colipase gene and type 2 diabetes mellitus in two independent Caucasian study populations.</title>
        <authorList>
            <person name="Lindner I."/>
            <person name="Helwig U."/>
            <person name="Rubin D."/>
            <person name="Li Y."/>
            <person name="Fisher E."/>
            <person name="Boeing H."/>
            <person name="Mohlig M."/>
            <person name="Spranger J."/>
            <person name="Pfeiffer A."/>
            <person name="Hampe J."/>
            <person name="Schreiber S."/>
            <person name="Doring F."/>
            <person name="Schrezenmeir J."/>
        </authorList>
    </citation>
    <scope>VARIANT CYS-109</scope>
    <scope>ASSOCIATION WITH TYPE 2 DIABETES</scope>
</reference>
<feature type="signal peptide">
    <location>
        <begin position="1"/>
        <end position="17"/>
    </location>
</feature>
<feature type="propeptide" id="PRO_0000005696" description="Enterostatin, activation peptide" evidence="1">
    <location>
        <begin position="18"/>
        <end position="22"/>
    </location>
</feature>
<feature type="chain" id="PRO_0000005697" description="Colipase">
    <location>
        <begin position="23"/>
        <end position="112"/>
    </location>
</feature>
<feature type="disulfide bond" evidence="2">
    <location>
        <begin position="34"/>
        <end position="45"/>
    </location>
</feature>
<feature type="disulfide bond" evidence="2">
    <location>
        <begin position="40"/>
        <end position="56"/>
    </location>
</feature>
<feature type="disulfide bond" evidence="2">
    <location>
        <begin position="44"/>
        <end position="78"/>
    </location>
</feature>
<feature type="disulfide bond" evidence="2">
    <location>
        <begin position="66"/>
        <end position="86"/>
    </location>
</feature>
<feature type="disulfide bond" evidence="2">
    <location>
        <begin position="80"/>
        <end position="104"/>
    </location>
</feature>
<feature type="sequence variant" id="VAR_053040" description="In dbSNP:rs2766597.">
    <original>L</original>
    <variation>P</variation>
    <location>
        <position position="8"/>
    </location>
</feature>
<feature type="sequence variant" id="VAR_047105" description="In dbSNP:rs41270082." evidence="3">
    <original>R</original>
    <variation>C</variation>
    <location>
        <position position="109"/>
    </location>
</feature>
<protein>
    <recommendedName>
        <fullName evidence="7">Colipase</fullName>
    </recommendedName>
</protein>
<dbReference type="EMBL" id="J02883">
    <property type="protein sequence ID" value="AAA52054.1"/>
    <property type="molecule type" value="mRNA"/>
</dbReference>
<dbReference type="EMBL" id="M95529">
    <property type="protein sequence ID" value="AAB05818.1"/>
    <property type="molecule type" value="Genomic_DNA"/>
</dbReference>
<dbReference type="EMBL" id="BT006812">
    <property type="protein sequence ID" value="AAP35458.1"/>
    <property type="molecule type" value="mRNA"/>
</dbReference>
<dbReference type="EMBL" id="AL157823">
    <property type="status" value="NOT_ANNOTATED_CDS"/>
    <property type="molecule type" value="Genomic_DNA"/>
</dbReference>
<dbReference type="EMBL" id="CH471081">
    <property type="protein sequence ID" value="EAX03850.1"/>
    <property type="molecule type" value="Genomic_DNA"/>
</dbReference>
<dbReference type="EMBL" id="BC007061">
    <property type="protein sequence ID" value="AAH07061.1"/>
    <property type="molecule type" value="mRNA"/>
</dbReference>
<dbReference type="EMBL" id="BC017897">
    <property type="protein sequence ID" value="AAH17897.1"/>
    <property type="molecule type" value="mRNA"/>
</dbReference>
<dbReference type="EMBL" id="AY780648">
    <property type="protein sequence ID" value="AAV35728.1"/>
    <property type="molecule type" value="mRNA"/>
</dbReference>
<dbReference type="CCDS" id="CCDS4811.1"/>
<dbReference type="PIR" id="A42568">
    <property type="entry name" value="XLHU"/>
</dbReference>
<dbReference type="RefSeq" id="NP_001823.1">
    <property type="nucleotide sequence ID" value="NM_001832.4"/>
</dbReference>
<dbReference type="SMR" id="P04118"/>
<dbReference type="BioGRID" id="107618">
    <property type="interactions" value="3"/>
</dbReference>
<dbReference type="FunCoup" id="P04118">
    <property type="interactions" value="212"/>
</dbReference>
<dbReference type="STRING" id="9606.ENSP00000259938"/>
<dbReference type="DrugBank" id="DB04233">
    <property type="generic name" value="(Hydroxyethyloxy)Tri(Ethyloxy)Octane"/>
</dbReference>
<dbReference type="DrugBank" id="DB02451">
    <property type="generic name" value="B-nonylglucoside"/>
</dbReference>
<dbReference type="DrugBank" id="DB08222">
    <property type="generic name" value="METHOXYUNDECYLPHOSPHINIC ACID"/>
</dbReference>
<dbReference type="iPTMnet" id="P04118"/>
<dbReference type="PhosphoSitePlus" id="P04118"/>
<dbReference type="BioMuta" id="CLPS"/>
<dbReference type="DMDM" id="116900"/>
<dbReference type="MassIVE" id="P04118"/>
<dbReference type="PaxDb" id="9606-ENSP00000259938"/>
<dbReference type="PeptideAtlas" id="P04118"/>
<dbReference type="ProteomicsDB" id="51655"/>
<dbReference type="Antibodypedia" id="15257">
    <property type="antibodies" value="270 antibodies from 25 providers"/>
</dbReference>
<dbReference type="DNASU" id="1208"/>
<dbReference type="Ensembl" id="ENST00000259938.7">
    <property type="protein sequence ID" value="ENSP00000259938.2"/>
    <property type="gene ID" value="ENSG00000137392.10"/>
</dbReference>
<dbReference type="GeneID" id="1208"/>
<dbReference type="KEGG" id="hsa:1208"/>
<dbReference type="MANE-Select" id="ENST00000259938.7">
    <property type="protein sequence ID" value="ENSP00000259938.2"/>
    <property type="RefSeq nucleotide sequence ID" value="NM_001832.4"/>
    <property type="RefSeq protein sequence ID" value="NP_001823.1"/>
</dbReference>
<dbReference type="UCSC" id="uc003ole.3">
    <property type="organism name" value="human"/>
</dbReference>
<dbReference type="AGR" id="HGNC:2085"/>
<dbReference type="CTD" id="1208"/>
<dbReference type="DisGeNET" id="1208"/>
<dbReference type="GeneCards" id="CLPS"/>
<dbReference type="HGNC" id="HGNC:2085">
    <property type="gene designation" value="CLPS"/>
</dbReference>
<dbReference type="HPA" id="ENSG00000137392">
    <property type="expression patterns" value="Tissue enriched (pancreas)"/>
</dbReference>
<dbReference type="MIM" id="120105">
    <property type="type" value="gene"/>
</dbReference>
<dbReference type="neXtProt" id="NX_P04118"/>
<dbReference type="OpenTargets" id="ENSG00000137392"/>
<dbReference type="PharmGKB" id="PA26611"/>
<dbReference type="VEuPathDB" id="HostDB:ENSG00000137392"/>
<dbReference type="eggNOG" id="ENOG502S4NY">
    <property type="taxonomic scope" value="Eukaryota"/>
</dbReference>
<dbReference type="GeneTree" id="ENSGT00390000012644"/>
<dbReference type="HOGENOM" id="CLU_165591_0_0_1"/>
<dbReference type="InParanoid" id="P04118"/>
<dbReference type="OMA" id="CSPKTLY"/>
<dbReference type="OrthoDB" id="9826993at2759"/>
<dbReference type="PAN-GO" id="P04118">
    <property type="GO annotations" value="1 GO annotation based on evolutionary models"/>
</dbReference>
<dbReference type="PhylomeDB" id="P04118"/>
<dbReference type="TreeFam" id="TF336178"/>
<dbReference type="PathwayCommons" id="P04118"/>
<dbReference type="Reactome" id="R-HSA-192456">
    <property type="pathway name" value="Digestion of dietary lipid"/>
</dbReference>
<dbReference type="Reactome" id="R-HSA-975634">
    <property type="pathway name" value="Retinoid metabolism and transport"/>
</dbReference>
<dbReference type="SignaLink" id="P04118"/>
<dbReference type="BioGRID-ORCS" id="1208">
    <property type="hits" value="53 hits in 1144 CRISPR screens"/>
</dbReference>
<dbReference type="GeneWiki" id="Colipase"/>
<dbReference type="GenomeRNAi" id="1208"/>
<dbReference type="Pharos" id="P04118">
    <property type="development level" value="Tbio"/>
</dbReference>
<dbReference type="PRO" id="PR:P04118"/>
<dbReference type="Proteomes" id="UP000005640">
    <property type="component" value="Chromosome 6"/>
</dbReference>
<dbReference type="RNAct" id="P04118">
    <property type="molecule type" value="protein"/>
</dbReference>
<dbReference type="Bgee" id="ENSG00000137392">
    <property type="expression patterns" value="Expressed in body of pancreas and 102 other cell types or tissues"/>
</dbReference>
<dbReference type="ExpressionAtlas" id="P04118">
    <property type="expression patterns" value="baseline and differential"/>
</dbReference>
<dbReference type="GO" id="GO:0005576">
    <property type="term" value="C:extracellular region"/>
    <property type="evidence" value="ECO:0000304"/>
    <property type="project" value="Reactome"/>
</dbReference>
<dbReference type="GO" id="GO:0008047">
    <property type="term" value="F:enzyme activator activity"/>
    <property type="evidence" value="ECO:0007669"/>
    <property type="project" value="Ensembl"/>
</dbReference>
<dbReference type="GO" id="GO:0035473">
    <property type="term" value="F:lipase binding"/>
    <property type="evidence" value="ECO:0007669"/>
    <property type="project" value="InterPro"/>
</dbReference>
<dbReference type="GO" id="GO:0007586">
    <property type="term" value="P:digestion"/>
    <property type="evidence" value="ECO:0007669"/>
    <property type="project" value="UniProtKB-KW"/>
</dbReference>
<dbReference type="GO" id="GO:0016042">
    <property type="term" value="P:lipid catabolic process"/>
    <property type="evidence" value="ECO:0007669"/>
    <property type="project" value="UniProtKB-KW"/>
</dbReference>
<dbReference type="GO" id="GO:0006629">
    <property type="term" value="P:lipid metabolic process"/>
    <property type="evidence" value="ECO:0000303"/>
    <property type="project" value="ProtInc"/>
</dbReference>
<dbReference type="GO" id="GO:0009617">
    <property type="term" value="P:response to bacterium"/>
    <property type="evidence" value="ECO:0007669"/>
    <property type="project" value="Ensembl"/>
</dbReference>
<dbReference type="GO" id="GO:0032094">
    <property type="term" value="P:response to food"/>
    <property type="evidence" value="ECO:0000318"/>
    <property type="project" value="GO_Central"/>
</dbReference>
<dbReference type="GO" id="GO:0001523">
    <property type="term" value="P:retinoid metabolic process"/>
    <property type="evidence" value="ECO:0007669"/>
    <property type="project" value="Ensembl"/>
</dbReference>
<dbReference type="CDD" id="cd23011">
    <property type="entry name" value="CLPS"/>
    <property type="match status" value="1"/>
</dbReference>
<dbReference type="FunFam" id="2.10.80.10:FF:000005">
    <property type="entry name" value="Colipase"/>
    <property type="match status" value="1"/>
</dbReference>
<dbReference type="Gene3D" id="2.10.80.10">
    <property type="entry name" value="Lipase, subunit A"/>
    <property type="match status" value="1"/>
</dbReference>
<dbReference type="InterPro" id="IPR047576">
    <property type="entry name" value="CLPS_chr"/>
</dbReference>
<dbReference type="InterPro" id="IPR001981">
    <property type="entry name" value="Colipase"/>
</dbReference>
<dbReference type="InterPro" id="IPR017914">
    <property type="entry name" value="Colipase_C"/>
</dbReference>
<dbReference type="InterPro" id="IPR017915">
    <property type="entry name" value="Colipase_CS"/>
</dbReference>
<dbReference type="InterPro" id="IPR017913">
    <property type="entry name" value="Colipase_N"/>
</dbReference>
<dbReference type="PANTHER" id="PTHR10041">
    <property type="entry name" value="COLIPASE"/>
    <property type="match status" value="1"/>
</dbReference>
<dbReference type="PANTHER" id="PTHR10041:SF8">
    <property type="entry name" value="COLIPASE"/>
    <property type="match status" value="1"/>
</dbReference>
<dbReference type="Pfam" id="PF01114">
    <property type="entry name" value="Colipase"/>
    <property type="match status" value="1"/>
</dbReference>
<dbReference type="Pfam" id="PF02740">
    <property type="entry name" value="Colipase_C"/>
    <property type="match status" value="1"/>
</dbReference>
<dbReference type="PRINTS" id="PR00128">
    <property type="entry name" value="COLIPASE"/>
</dbReference>
<dbReference type="SMART" id="SM00023">
    <property type="entry name" value="COLIPASE"/>
    <property type="match status" value="1"/>
</dbReference>
<dbReference type="SUPFAM" id="SSF57190">
    <property type="entry name" value="Colipase-like"/>
    <property type="match status" value="2"/>
</dbReference>
<dbReference type="PROSITE" id="PS00121">
    <property type="entry name" value="COLIPASE_1"/>
    <property type="match status" value="1"/>
</dbReference>
<dbReference type="PROSITE" id="PS51342">
    <property type="entry name" value="COLIPASE_2"/>
    <property type="match status" value="1"/>
</dbReference>
<sequence length="112" mass="11954">MEKILILLLVALSVAYAAPGPRGIIINLENGELCMNSAQCKSNCCQHSSALGLARCTSMASENSECSVKTLYGIYYKCPCERGLTCEGDKTIVGSITNTNFGICHDAGRSKQ</sequence>
<keyword id="KW-0219">Diabetes mellitus</keyword>
<keyword id="KW-0222">Digestion</keyword>
<keyword id="KW-0903">Direct protein sequencing</keyword>
<keyword id="KW-1015">Disulfide bond</keyword>
<keyword id="KW-0442">Lipid degradation</keyword>
<keyword id="KW-0443">Lipid metabolism</keyword>
<keyword id="KW-1267">Proteomics identification</keyword>
<keyword id="KW-1185">Reference proteome</keyword>
<keyword id="KW-0964">Secreted</keyword>
<keyword id="KW-0732">Signal</keyword>
<gene>
    <name evidence="8" type="primary">CLPS</name>
</gene>
<proteinExistence type="evidence at protein level"/>
<comment type="function">
    <text evidence="4 6">Colipase is a cofactor of pancreatic lipase. It allows the lipase to anchor itself to the lipid-water interface. Without colipase the enzyme is washed off by bile salts, which have an inhibitory effect on the lipase.</text>
</comment>
<comment type="function">
    <text evidence="7">Enterostatin has a biological activity as a satiety signal.</text>
</comment>
<comment type="subunit">
    <text evidence="3">Forms a 1:1 stoichiometric complex with pancreatic lipase.</text>
</comment>
<comment type="subcellular location">
    <subcellularLocation>
        <location evidence="7">Secreted</location>
    </subcellularLocation>
</comment>
<comment type="tissue specificity">
    <text evidence="5">Expressed by the pancreas.</text>
</comment>
<comment type="polymorphism">
    <text evidence="3">Variant Cys-109 is statistically significantly associated with an increased risk of type 2 diabetes.</text>
</comment>
<comment type="similarity">
    <text evidence="2">Belongs to the colipase family.</text>
</comment>
<comment type="online information" name="Wikipedia">
    <link uri="https://en.wikipedia.org/wiki/Colipase"/>
    <text>Colipase entry</text>
</comment>
<organism>
    <name type="scientific">Homo sapiens</name>
    <name type="common">Human</name>
    <dbReference type="NCBI Taxonomy" id="9606"/>
    <lineage>
        <taxon>Eukaryota</taxon>
        <taxon>Metazoa</taxon>
        <taxon>Chordata</taxon>
        <taxon>Craniata</taxon>
        <taxon>Vertebrata</taxon>
        <taxon>Euteleostomi</taxon>
        <taxon>Mammalia</taxon>
        <taxon>Eutheria</taxon>
        <taxon>Euarchontoglires</taxon>
        <taxon>Primates</taxon>
        <taxon>Haplorrhini</taxon>
        <taxon>Catarrhini</taxon>
        <taxon>Hominidae</taxon>
        <taxon>Homo</taxon>
    </lineage>
</organism>